<dbReference type="EC" id="2.4.1.227" evidence="1"/>
<dbReference type="EMBL" id="AM747720">
    <property type="protein sequence ID" value="CAR53785.1"/>
    <property type="molecule type" value="Genomic_DNA"/>
</dbReference>
<dbReference type="RefSeq" id="WP_006487111.1">
    <property type="nucleotide sequence ID" value="NC_011000.1"/>
</dbReference>
<dbReference type="SMR" id="B4E6J2"/>
<dbReference type="CAZy" id="GT28">
    <property type="family name" value="Glycosyltransferase Family 28"/>
</dbReference>
<dbReference type="KEGG" id="bcj:BCAL3462"/>
<dbReference type="eggNOG" id="COG0707">
    <property type="taxonomic scope" value="Bacteria"/>
</dbReference>
<dbReference type="HOGENOM" id="CLU_037404_2_0_4"/>
<dbReference type="BioCyc" id="BCEN216591:G1G1V-3850-MONOMER"/>
<dbReference type="UniPathway" id="UPA00219"/>
<dbReference type="Proteomes" id="UP000001035">
    <property type="component" value="Chromosome 1"/>
</dbReference>
<dbReference type="GO" id="GO:0005886">
    <property type="term" value="C:plasma membrane"/>
    <property type="evidence" value="ECO:0007669"/>
    <property type="project" value="UniProtKB-SubCell"/>
</dbReference>
<dbReference type="GO" id="GO:0051991">
    <property type="term" value="F:UDP-N-acetyl-D-glucosamine:N-acetylmuramoyl-L-alanyl-D-glutamyl-meso-2,6-diaminopimelyl-D-alanyl-D-alanine-diphosphoundecaprenol 4-beta-N-acetylglucosaminlytransferase activity"/>
    <property type="evidence" value="ECO:0007669"/>
    <property type="project" value="RHEA"/>
</dbReference>
<dbReference type="GO" id="GO:0050511">
    <property type="term" value="F:undecaprenyldiphospho-muramoylpentapeptide beta-N-acetylglucosaminyltransferase activity"/>
    <property type="evidence" value="ECO:0007669"/>
    <property type="project" value="UniProtKB-UniRule"/>
</dbReference>
<dbReference type="GO" id="GO:0005975">
    <property type="term" value="P:carbohydrate metabolic process"/>
    <property type="evidence" value="ECO:0007669"/>
    <property type="project" value="InterPro"/>
</dbReference>
<dbReference type="GO" id="GO:0051301">
    <property type="term" value="P:cell division"/>
    <property type="evidence" value="ECO:0007669"/>
    <property type="project" value="UniProtKB-KW"/>
</dbReference>
<dbReference type="GO" id="GO:0071555">
    <property type="term" value="P:cell wall organization"/>
    <property type="evidence" value="ECO:0007669"/>
    <property type="project" value="UniProtKB-KW"/>
</dbReference>
<dbReference type="GO" id="GO:0030259">
    <property type="term" value="P:lipid glycosylation"/>
    <property type="evidence" value="ECO:0007669"/>
    <property type="project" value="UniProtKB-UniRule"/>
</dbReference>
<dbReference type="GO" id="GO:0009252">
    <property type="term" value="P:peptidoglycan biosynthetic process"/>
    <property type="evidence" value="ECO:0007669"/>
    <property type="project" value="UniProtKB-UniRule"/>
</dbReference>
<dbReference type="GO" id="GO:0008360">
    <property type="term" value="P:regulation of cell shape"/>
    <property type="evidence" value="ECO:0007669"/>
    <property type="project" value="UniProtKB-KW"/>
</dbReference>
<dbReference type="CDD" id="cd03785">
    <property type="entry name" value="GT28_MurG"/>
    <property type="match status" value="1"/>
</dbReference>
<dbReference type="Gene3D" id="3.40.50.2000">
    <property type="entry name" value="Glycogen Phosphorylase B"/>
    <property type="match status" value="2"/>
</dbReference>
<dbReference type="HAMAP" id="MF_00033">
    <property type="entry name" value="MurG"/>
    <property type="match status" value="1"/>
</dbReference>
<dbReference type="InterPro" id="IPR006009">
    <property type="entry name" value="GlcNAc_MurG"/>
</dbReference>
<dbReference type="InterPro" id="IPR007235">
    <property type="entry name" value="Glyco_trans_28_C"/>
</dbReference>
<dbReference type="InterPro" id="IPR004276">
    <property type="entry name" value="GlycoTrans_28_N"/>
</dbReference>
<dbReference type="NCBIfam" id="TIGR01133">
    <property type="entry name" value="murG"/>
    <property type="match status" value="1"/>
</dbReference>
<dbReference type="PANTHER" id="PTHR21015:SF22">
    <property type="entry name" value="GLYCOSYLTRANSFERASE"/>
    <property type="match status" value="1"/>
</dbReference>
<dbReference type="PANTHER" id="PTHR21015">
    <property type="entry name" value="UDP-N-ACETYLGLUCOSAMINE--N-ACETYLMURAMYL-(PENTAPEPTIDE) PYROPHOSPHORYL-UNDECAPRENOL N-ACETYLGLUCOSAMINE TRANSFERASE 1"/>
    <property type="match status" value="1"/>
</dbReference>
<dbReference type="Pfam" id="PF04101">
    <property type="entry name" value="Glyco_tran_28_C"/>
    <property type="match status" value="1"/>
</dbReference>
<dbReference type="Pfam" id="PF03033">
    <property type="entry name" value="Glyco_transf_28"/>
    <property type="match status" value="1"/>
</dbReference>
<dbReference type="SUPFAM" id="SSF53756">
    <property type="entry name" value="UDP-Glycosyltransferase/glycogen phosphorylase"/>
    <property type="match status" value="1"/>
</dbReference>
<sequence>MTASQRTLMVMAGGTGGHVFPGLAVAHRMEAAGWRVVWLGNPAGMEATLVPKHGIPMEYVRFGGLRGKGLKTKLTLPVNLLRACWQSLGALRRVRPDVVLGMGGYITFPAGVMTALSGRPLVLHEQNSIAGLTNKVLAKLAKRVLVAFPGALPHAEWTGNPIRAELAHTEPPQARYASRGGPLNVLVVGGSLGAAALNEVVPRALALLAPGERPRVVHQAGVKHIEALKANYEAAGFAAGEDVRLVPFIDDMAAAYAAADLVICRSGAMTVSEIAAVGVAALFVPFPHAVDDHQTTNAAFLADAGAAVLVQQRDLSAELLADWLRGQSRASLADMAERSRSLAKPEATDEVARVCAKAAGANLEQLQ</sequence>
<gene>
    <name evidence="1" type="primary">murG</name>
    <name type="ordered locus">BceJ2315_34000</name>
    <name type="ORF">BCAL3462</name>
</gene>
<protein>
    <recommendedName>
        <fullName evidence="1">UDP-N-acetylglucosamine--N-acetylmuramyl-(pentapeptide) pyrophosphoryl-undecaprenol N-acetylglucosamine transferase</fullName>
        <ecNumber evidence="1">2.4.1.227</ecNumber>
    </recommendedName>
    <alternativeName>
        <fullName evidence="1">Undecaprenyl-PP-MurNAc-pentapeptide-UDPGlcNAc GlcNAc transferase</fullName>
    </alternativeName>
</protein>
<feature type="chain" id="PRO_1000090411" description="UDP-N-acetylglucosamine--N-acetylmuramyl-(pentapeptide) pyrophosphoryl-undecaprenol N-acetylglucosamine transferase">
    <location>
        <begin position="1"/>
        <end position="367"/>
    </location>
</feature>
<feature type="binding site" evidence="1">
    <location>
        <begin position="15"/>
        <end position="17"/>
    </location>
    <ligand>
        <name>UDP-N-acetyl-alpha-D-glucosamine</name>
        <dbReference type="ChEBI" id="CHEBI:57705"/>
    </ligand>
</feature>
<feature type="binding site" evidence="1">
    <location>
        <position position="127"/>
    </location>
    <ligand>
        <name>UDP-N-acetyl-alpha-D-glucosamine</name>
        <dbReference type="ChEBI" id="CHEBI:57705"/>
    </ligand>
</feature>
<feature type="binding site" evidence="1">
    <location>
        <position position="163"/>
    </location>
    <ligand>
        <name>UDP-N-acetyl-alpha-D-glucosamine</name>
        <dbReference type="ChEBI" id="CHEBI:57705"/>
    </ligand>
</feature>
<feature type="binding site" evidence="1">
    <location>
        <position position="191"/>
    </location>
    <ligand>
        <name>UDP-N-acetyl-alpha-D-glucosamine</name>
        <dbReference type="ChEBI" id="CHEBI:57705"/>
    </ligand>
</feature>
<feature type="binding site" evidence="1">
    <location>
        <position position="249"/>
    </location>
    <ligand>
        <name>UDP-N-acetyl-alpha-D-glucosamine</name>
        <dbReference type="ChEBI" id="CHEBI:57705"/>
    </ligand>
</feature>
<feature type="binding site" evidence="1">
    <location>
        <position position="294"/>
    </location>
    <ligand>
        <name>UDP-N-acetyl-alpha-D-glucosamine</name>
        <dbReference type="ChEBI" id="CHEBI:57705"/>
    </ligand>
</feature>
<keyword id="KW-0131">Cell cycle</keyword>
<keyword id="KW-0132">Cell division</keyword>
<keyword id="KW-0997">Cell inner membrane</keyword>
<keyword id="KW-1003">Cell membrane</keyword>
<keyword id="KW-0133">Cell shape</keyword>
<keyword id="KW-0961">Cell wall biogenesis/degradation</keyword>
<keyword id="KW-0328">Glycosyltransferase</keyword>
<keyword id="KW-0472">Membrane</keyword>
<keyword id="KW-0573">Peptidoglycan synthesis</keyword>
<keyword id="KW-0808">Transferase</keyword>
<accession>B4E6J2</accession>
<proteinExistence type="inferred from homology"/>
<comment type="function">
    <text evidence="1">Cell wall formation. Catalyzes the transfer of a GlcNAc subunit on undecaprenyl-pyrophosphoryl-MurNAc-pentapeptide (lipid intermediate I) to form undecaprenyl-pyrophosphoryl-MurNAc-(pentapeptide)GlcNAc (lipid intermediate II).</text>
</comment>
<comment type="catalytic activity">
    <reaction evidence="1">
        <text>di-trans,octa-cis-undecaprenyl diphospho-N-acetyl-alpha-D-muramoyl-L-alanyl-D-glutamyl-meso-2,6-diaminopimeloyl-D-alanyl-D-alanine + UDP-N-acetyl-alpha-D-glucosamine = di-trans,octa-cis-undecaprenyl diphospho-[N-acetyl-alpha-D-glucosaminyl-(1-&gt;4)]-N-acetyl-alpha-D-muramoyl-L-alanyl-D-glutamyl-meso-2,6-diaminopimeloyl-D-alanyl-D-alanine + UDP + H(+)</text>
        <dbReference type="Rhea" id="RHEA:31227"/>
        <dbReference type="ChEBI" id="CHEBI:15378"/>
        <dbReference type="ChEBI" id="CHEBI:57705"/>
        <dbReference type="ChEBI" id="CHEBI:58223"/>
        <dbReference type="ChEBI" id="CHEBI:61387"/>
        <dbReference type="ChEBI" id="CHEBI:61388"/>
        <dbReference type="EC" id="2.4.1.227"/>
    </reaction>
</comment>
<comment type="pathway">
    <text evidence="1">Cell wall biogenesis; peptidoglycan biosynthesis.</text>
</comment>
<comment type="subcellular location">
    <subcellularLocation>
        <location evidence="1">Cell inner membrane</location>
        <topology evidence="1">Peripheral membrane protein</topology>
        <orientation evidence="1">Cytoplasmic side</orientation>
    </subcellularLocation>
</comment>
<comment type="similarity">
    <text evidence="1">Belongs to the glycosyltransferase 28 family. MurG subfamily.</text>
</comment>
<name>MURG_BURCJ</name>
<organism>
    <name type="scientific">Burkholderia cenocepacia (strain ATCC BAA-245 / DSM 16553 / LMG 16656 / NCTC 13227 / J2315 / CF5610)</name>
    <name type="common">Burkholderia cepacia (strain J2315)</name>
    <dbReference type="NCBI Taxonomy" id="216591"/>
    <lineage>
        <taxon>Bacteria</taxon>
        <taxon>Pseudomonadati</taxon>
        <taxon>Pseudomonadota</taxon>
        <taxon>Betaproteobacteria</taxon>
        <taxon>Burkholderiales</taxon>
        <taxon>Burkholderiaceae</taxon>
        <taxon>Burkholderia</taxon>
        <taxon>Burkholderia cepacia complex</taxon>
    </lineage>
</organism>
<reference key="1">
    <citation type="journal article" date="2009" name="J. Bacteriol.">
        <title>The genome of Burkholderia cenocepacia J2315, an epidemic pathogen of cystic fibrosis patients.</title>
        <authorList>
            <person name="Holden M.T."/>
            <person name="Seth-Smith H.M."/>
            <person name="Crossman L.C."/>
            <person name="Sebaihia M."/>
            <person name="Bentley S.D."/>
            <person name="Cerdeno-Tarraga A.M."/>
            <person name="Thomson N.R."/>
            <person name="Bason N."/>
            <person name="Quail M.A."/>
            <person name="Sharp S."/>
            <person name="Cherevach I."/>
            <person name="Churcher C."/>
            <person name="Goodhead I."/>
            <person name="Hauser H."/>
            <person name="Holroyd N."/>
            <person name="Mungall K."/>
            <person name="Scott P."/>
            <person name="Walker D."/>
            <person name="White B."/>
            <person name="Rose H."/>
            <person name="Iversen P."/>
            <person name="Mil-Homens D."/>
            <person name="Rocha E.P."/>
            <person name="Fialho A.M."/>
            <person name="Baldwin A."/>
            <person name="Dowson C."/>
            <person name="Barrell B.G."/>
            <person name="Govan J.R."/>
            <person name="Vandamme P."/>
            <person name="Hart C.A."/>
            <person name="Mahenthiralingam E."/>
            <person name="Parkhill J."/>
        </authorList>
    </citation>
    <scope>NUCLEOTIDE SEQUENCE [LARGE SCALE GENOMIC DNA]</scope>
    <source>
        <strain>ATCC BAA-245 / DSM 16553 / LMG 16656 / NCTC 13227 / J2315 / CF5610</strain>
    </source>
</reference>
<evidence type="ECO:0000255" key="1">
    <source>
        <dbReference type="HAMAP-Rule" id="MF_00033"/>
    </source>
</evidence>